<evidence type="ECO:0000250" key="1"/>
<evidence type="ECO:0000250" key="2">
    <source>
        <dbReference type="UniProtKB" id="Q811T9"/>
    </source>
</evidence>
<evidence type="ECO:0000250" key="3">
    <source>
        <dbReference type="UniProtKB" id="Q9NRI5"/>
    </source>
</evidence>
<evidence type="ECO:0000255" key="4"/>
<evidence type="ECO:0000256" key="5">
    <source>
        <dbReference type="SAM" id="MobiDB-lite"/>
    </source>
</evidence>
<evidence type="ECO:0000269" key="6">
    <source>
    </source>
</evidence>
<evidence type="ECO:0000269" key="7">
    <source>
    </source>
</evidence>
<evidence type="ECO:0000269" key="8">
    <source>
    </source>
</evidence>
<evidence type="ECO:0000303" key="9">
    <source>
    </source>
</evidence>
<evidence type="ECO:0000305" key="10"/>
<evidence type="ECO:0000312" key="11">
    <source>
        <dbReference type="RGD" id="631359"/>
    </source>
</evidence>
<comment type="function">
    <text evidence="2 3 7">Involved in the regulation of multiple aspects of embryonic and adult neurogenesis (PubMed:17035248). Required for neural progenitor proliferation in the ventrical/subventrical zone during embryonic brain development and in the adult dentate gyrus of the hippocampus. Participates in the Wnt-mediated neural progenitor proliferation as a positive regulator by modulating GSK3B activity and CTNNB1 abundance. Plays a role as a modulator of the AKT-mTOR signaling pathway controlling the tempo of the process of newborn neurons integration during adult neurogenesis, including neuron positioning, dendritic development and synapse formation. Inhibits the activation of AKT-mTOR signaling upon interaction with CCDC88A. Regulates the migration of early-born granule cell precursors toward the dentate gyrus during the hippocampal development. Inhibits ATF4 transcription factor activity in neurons by disrupting ATF4 dimerization and DNA-binding (By similarity). Plays a role, together with PCNT, in the microtubule network formation (By similarity).</text>
</comment>
<comment type="subunit">
    <text evidence="2 3 7 8">Interacts with NDEL1 (PubMed:17035248). Interacts with CCDC88A (via C-terminus); the interaction is direct. Interacts with GSK3B (By similarity). Interacts with tubulin alpha, ACTN2, ANKHD1, ATF4, ATF5, CEP63, EIF3S3, MAP1A, NDEL1, PAFAH1B1, RANBP9, SPTBN4, SYNE1 and TRAF3IP1. Interaction with microtubules may be mediated in part by TRAF3IP1. Interacts (via C-terminal) with PCNT. Interacts with CHCHD6 (By similarity). Interacts with CCDC141 (By similarity). Interacts with FBXW7, the substrate-recognition component of a SCF (SKP1-CUL1-F-box protein) E3 ubiquitin-protein ligase complex; the interaction targets DISC1 for proteasomal degradation (By similarity). Interacts with ZNF365 (PubMed:17389905). Interacts with ATF4; inhibiting ATF4 transcription factor activity by disrupting ATF4 dimerization and DNA-binding (By similarity). Interacts with PDE4B (By similarity).</text>
</comment>
<comment type="subcellular location">
    <subcellularLocation>
        <location evidence="6">Cytoplasm</location>
    </subcellularLocation>
    <subcellularLocation>
        <location evidence="3">Cytoplasm</location>
        <location evidence="3">Cytoskeleton</location>
    </subcellularLocation>
    <subcellularLocation>
        <location evidence="6">Mitochondrion</location>
    </subcellularLocation>
    <subcellularLocation>
        <location evidence="3">Cytoplasm</location>
        <location evidence="3">Cytoskeleton</location>
        <location evidence="3">Microtubule organizing center</location>
        <location evidence="3">Centrosome</location>
    </subcellularLocation>
    <subcellularLocation>
        <location evidence="2">Postsynaptic density</location>
    </subcellularLocation>
    <text evidence="2 3 6">Colocalizes with NDEL1 in the perinuclear region and the centrosome (By similarity). Localizes to punctate cytoplasmic foci which overlap in part with mitochondria (PubMed:12506198). Colocalizes with PCNT at the centrosome (By similarity).</text>
</comment>
<comment type="alternative products">
    <event type="alternative splicing"/>
    <isoform>
        <id>Q810H6-1</id>
        <name>1</name>
        <sequence type="displayed"/>
    </isoform>
    <isoform>
        <id>Q810H6-2</id>
        <name>2</name>
        <sequence type="described" ref="VSP_019322"/>
    </isoform>
</comment>
<comment type="tissue specificity">
    <text evidence="6">Expressed in brain, heart, kidney, liver and thymus. Within the brain expression is high in the cerebral cortex, hippocampus and olfactory bulb and is also seen at lower levels in the cerebellum (at protein level).</text>
</comment>
<comment type="developmental stage">
    <text evidence="6">Expressed at high levels at 20.5 dpc. Expressed at lower levels at P2 and P6 and in adults (at protein level).</text>
</comment>
<comment type="induction">
    <text evidence="7">Up-regulated during neurite outgrowth upon differentiation with NGF.</text>
</comment>
<comment type="PTM">
    <text evidence="3">Ubiquitinated. Ubiquitination with 'Lys-48'-linked polyubiquitin chains leads to its proteasomal degradation.</text>
</comment>
<organism>
    <name type="scientific">Rattus norvegicus</name>
    <name type="common">Rat</name>
    <dbReference type="NCBI Taxonomy" id="10116"/>
    <lineage>
        <taxon>Eukaryota</taxon>
        <taxon>Metazoa</taxon>
        <taxon>Chordata</taxon>
        <taxon>Craniata</taxon>
        <taxon>Vertebrata</taxon>
        <taxon>Euteleostomi</taxon>
        <taxon>Mammalia</taxon>
        <taxon>Eutheria</taxon>
        <taxon>Euarchontoglires</taxon>
        <taxon>Glires</taxon>
        <taxon>Rodentia</taxon>
        <taxon>Myomorpha</taxon>
        <taxon>Muroidea</taxon>
        <taxon>Muridae</taxon>
        <taxon>Murinae</taxon>
        <taxon>Rattus</taxon>
    </lineage>
</organism>
<dbReference type="EMBL" id="AY177674">
    <property type="protein sequence ID" value="AAO19642.2"/>
    <property type="molecule type" value="mRNA"/>
</dbReference>
<dbReference type="EMBL" id="AABR03114003">
    <property type="status" value="NOT_ANNOTATED_CDS"/>
    <property type="molecule type" value="Genomic_DNA"/>
</dbReference>
<dbReference type="EMBL" id="AABR03114017">
    <property type="status" value="NOT_ANNOTATED_CDS"/>
    <property type="molecule type" value="Genomic_DNA"/>
</dbReference>
<dbReference type="EMBL" id="AABR03114274">
    <property type="status" value="NOT_ANNOTATED_CDS"/>
    <property type="molecule type" value="Genomic_DNA"/>
</dbReference>
<dbReference type="EMBL" id="AABR03114520">
    <property type="status" value="NOT_ANNOTATED_CDS"/>
    <property type="molecule type" value="Genomic_DNA"/>
</dbReference>
<dbReference type="EMBL" id="AABR03114547">
    <property type="status" value="NOT_ANNOTATED_CDS"/>
    <property type="molecule type" value="Genomic_DNA"/>
</dbReference>
<dbReference type="EMBL" id="AABR03114825">
    <property type="status" value="NOT_ANNOTATED_CDS"/>
    <property type="molecule type" value="Genomic_DNA"/>
</dbReference>
<dbReference type="EMBL" id="AABR03114846">
    <property type="status" value="NOT_ANNOTATED_CDS"/>
    <property type="molecule type" value="Genomic_DNA"/>
</dbReference>
<dbReference type="EMBL" id="AABR03114921">
    <property type="status" value="NOT_ANNOTATED_CDS"/>
    <property type="molecule type" value="Genomic_DNA"/>
</dbReference>
<dbReference type="EMBL" id="AABR03115035">
    <property type="status" value="NOT_ANNOTATED_CDS"/>
    <property type="molecule type" value="Genomic_DNA"/>
</dbReference>
<dbReference type="EMBL" id="AABR03115056">
    <property type="status" value="NOT_ANNOTATED_CDS"/>
    <property type="molecule type" value="Genomic_DNA"/>
</dbReference>
<dbReference type="EMBL" id="AABR03115070">
    <property type="status" value="NOT_ANNOTATED_CDS"/>
    <property type="molecule type" value="Genomic_DNA"/>
</dbReference>
<dbReference type="EMBL" id="AABR03115140">
    <property type="status" value="NOT_ANNOTATED_CDS"/>
    <property type="molecule type" value="Genomic_DNA"/>
</dbReference>
<dbReference type="EMBL" id="AABR03115229">
    <property type="status" value="NOT_ANNOTATED_CDS"/>
    <property type="molecule type" value="Genomic_DNA"/>
</dbReference>
<dbReference type="EMBL" id="AABR03115356">
    <property type="status" value="NOT_ANNOTATED_CDS"/>
    <property type="molecule type" value="Genomic_DNA"/>
</dbReference>
<dbReference type="EMBL" id="AABR03115432">
    <property type="status" value="NOT_ANNOTATED_CDS"/>
    <property type="molecule type" value="Genomic_DNA"/>
</dbReference>
<dbReference type="EMBL" id="AABR03115751">
    <property type="status" value="NOT_ANNOTATED_CDS"/>
    <property type="molecule type" value="Genomic_DNA"/>
</dbReference>
<dbReference type="EMBL" id="AABR03115947">
    <property type="status" value="NOT_ANNOTATED_CDS"/>
    <property type="molecule type" value="Genomic_DNA"/>
</dbReference>
<dbReference type="EMBL" id="AABR03116117">
    <property type="status" value="NOT_ANNOTATED_CDS"/>
    <property type="molecule type" value="Genomic_DNA"/>
</dbReference>
<dbReference type="RefSeq" id="NP_783186.2">
    <molecule id="Q810H6-2"/>
    <property type="nucleotide sequence ID" value="NM_175596.2"/>
</dbReference>
<dbReference type="RefSeq" id="XP_008770838.1">
    <property type="nucleotide sequence ID" value="XM_008772616.2"/>
</dbReference>
<dbReference type="RefSeq" id="XP_063134145.1">
    <molecule id="Q810H6-2"/>
    <property type="nucleotide sequence ID" value="XM_063278075.1"/>
</dbReference>
<dbReference type="SMR" id="Q810H6"/>
<dbReference type="BioGRID" id="258859">
    <property type="interactions" value="1"/>
</dbReference>
<dbReference type="CORUM" id="Q810H6"/>
<dbReference type="FunCoup" id="Q810H6">
    <property type="interactions" value="537"/>
</dbReference>
<dbReference type="STRING" id="10116.ENSRNOP00000054753"/>
<dbReference type="PhosphoSitePlus" id="Q810H6"/>
<dbReference type="PaxDb" id="10116-ENSRNOP00000054753"/>
<dbReference type="Ensembl" id="ENSRNOT00000119995.1">
    <molecule id="Q810H6-1"/>
    <property type="protein sequence ID" value="ENSRNOP00000095161.1"/>
    <property type="gene ID" value="ENSRNOG00000019779.8"/>
</dbReference>
<dbReference type="GeneID" id="307940"/>
<dbReference type="KEGG" id="rno:307940"/>
<dbReference type="UCSC" id="RGD:631359">
    <molecule id="Q810H6-1"/>
    <property type="organism name" value="rat"/>
</dbReference>
<dbReference type="AGR" id="RGD:631359"/>
<dbReference type="CTD" id="27185"/>
<dbReference type="RGD" id="631359">
    <property type="gene designation" value="Disc1"/>
</dbReference>
<dbReference type="eggNOG" id="ENOG502S3S3">
    <property type="taxonomic scope" value="Eukaryota"/>
</dbReference>
<dbReference type="GeneTree" id="ENSGT00390000006176"/>
<dbReference type="HOGENOM" id="CLU_016380_1_0_1"/>
<dbReference type="InParanoid" id="Q810H6"/>
<dbReference type="OMA" id="WTGKEEM"/>
<dbReference type="PhylomeDB" id="Q810H6"/>
<dbReference type="PRO" id="PR:Q810H6"/>
<dbReference type="Proteomes" id="UP000002494">
    <property type="component" value="Chromosome 19"/>
</dbReference>
<dbReference type="Bgee" id="ENSRNOG00000019779">
    <property type="expression patterns" value="Expressed in heart and 9 other cell types or tissues"/>
</dbReference>
<dbReference type="GO" id="GO:0030424">
    <property type="term" value="C:axon"/>
    <property type="evidence" value="ECO:0000314"/>
    <property type="project" value="RGD"/>
</dbReference>
<dbReference type="GO" id="GO:0044297">
    <property type="term" value="C:cell body"/>
    <property type="evidence" value="ECO:0000314"/>
    <property type="project" value="RGD"/>
</dbReference>
<dbReference type="GO" id="GO:0090724">
    <property type="term" value="C:central region of growth cone"/>
    <property type="evidence" value="ECO:0000314"/>
    <property type="project" value="RGD"/>
</dbReference>
<dbReference type="GO" id="GO:0005813">
    <property type="term" value="C:centrosome"/>
    <property type="evidence" value="ECO:0000314"/>
    <property type="project" value="UniProtKB"/>
</dbReference>
<dbReference type="GO" id="GO:0036064">
    <property type="term" value="C:ciliary basal body"/>
    <property type="evidence" value="ECO:0000266"/>
    <property type="project" value="RGD"/>
</dbReference>
<dbReference type="GO" id="GO:0097546">
    <property type="term" value="C:ciliary base"/>
    <property type="evidence" value="ECO:0000266"/>
    <property type="project" value="RGD"/>
</dbReference>
<dbReference type="GO" id="GO:0005829">
    <property type="term" value="C:cytosol"/>
    <property type="evidence" value="ECO:0007669"/>
    <property type="project" value="Ensembl"/>
</dbReference>
<dbReference type="GO" id="GO:0030286">
    <property type="term" value="C:dynein complex"/>
    <property type="evidence" value="ECO:0000314"/>
    <property type="project" value="RGD"/>
</dbReference>
<dbReference type="GO" id="GO:0098982">
    <property type="term" value="C:GABA-ergic synapse"/>
    <property type="evidence" value="ECO:0000266"/>
    <property type="project" value="RGD"/>
</dbReference>
<dbReference type="GO" id="GO:0098978">
    <property type="term" value="C:glutamatergic synapse"/>
    <property type="evidence" value="ECO:0000266"/>
    <property type="project" value="RGD"/>
</dbReference>
<dbReference type="GO" id="GO:0045111">
    <property type="term" value="C:intermediate filament cytoskeleton"/>
    <property type="evidence" value="ECO:0000318"/>
    <property type="project" value="GO_Central"/>
</dbReference>
<dbReference type="GO" id="GO:0005871">
    <property type="term" value="C:kinesin complex"/>
    <property type="evidence" value="ECO:0000314"/>
    <property type="project" value="RGD"/>
</dbReference>
<dbReference type="GO" id="GO:0005874">
    <property type="term" value="C:microtubule"/>
    <property type="evidence" value="ECO:0000314"/>
    <property type="project" value="RGD"/>
</dbReference>
<dbReference type="GO" id="GO:0005815">
    <property type="term" value="C:microtubule organizing center"/>
    <property type="evidence" value="ECO:0000318"/>
    <property type="project" value="GO_Central"/>
</dbReference>
<dbReference type="GO" id="GO:0005739">
    <property type="term" value="C:mitochondrion"/>
    <property type="evidence" value="ECO:0000266"/>
    <property type="project" value="RGD"/>
</dbReference>
<dbReference type="GO" id="GO:0048471">
    <property type="term" value="C:perinuclear region of cytoplasm"/>
    <property type="evidence" value="ECO:0000314"/>
    <property type="project" value="RGD"/>
</dbReference>
<dbReference type="GO" id="GO:0014069">
    <property type="term" value="C:postsynaptic density"/>
    <property type="evidence" value="ECO:0000266"/>
    <property type="project" value="RGD"/>
</dbReference>
<dbReference type="GO" id="GO:0098793">
    <property type="term" value="C:presynapse"/>
    <property type="evidence" value="ECO:0000266"/>
    <property type="project" value="RGD"/>
</dbReference>
<dbReference type="GO" id="GO:0008021">
    <property type="term" value="C:synaptic vesicle"/>
    <property type="evidence" value="ECO:0000266"/>
    <property type="project" value="RGD"/>
</dbReference>
<dbReference type="GO" id="GO:0008092">
    <property type="term" value="F:cytoskeletal protein binding"/>
    <property type="evidence" value="ECO:0000304"/>
    <property type="project" value="RGD"/>
</dbReference>
<dbReference type="GO" id="GO:0042802">
    <property type="term" value="F:identical protein binding"/>
    <property type="evidence" value="ECO:0000266"/>
    <property type="project" value="RGD"/>
</dbReference>
<dbReference type="GO" id="GO:0019894">
    <property type="term" value="F:kinesin binding"/>
    <property type="evidence" value="ECO:0000314"/>
    <property type="project" value="RGD"/>
</dbReference>
<dbReference type="GO" id="GO:0060090">
    <property type="term" value="F:molecular adaptor activity"/>
    <property type="evidence" value="ECO:0000266"/>
    <property type="project" value="RGD"/>
</dbReference>
<dbReference type="GO" id="GO:0044877">
    <property type="term" value="F:protein-containing complex binding"/>
    <property type="evidence" value="ECO:0000314"/>
    <property type="project" value="RGD"/>
</dbReference>
<dbReference type="GO" id="GO:0060070">
    <property type="term" value="P:canonical Wnt signaling pathway"/>
    <property type="evidence" value="ECO:0000266"/>
    <property type="project" value="RGD"/>
</dbReference>
<dbReference type="GO" id="GO:0021846">
    <property type="term" value="P:cell proliferation in forebrain"/>
    <property type="evidence" value="ECO:0000266"/>
    <property type="project" value="RGD"/>
</dbReference>
<dbReference type="GO" id="GO:0021799">
    <property type="term" value="P:cerebral cortex radially oriented cell migration"/>
    <property type="evidence" value="ECO:0000266"/>
    <property type="project" value="RGD"/>
</dbReference>
<dbReference type="GO" id="GO:0060271">
    <property type="term" value="P:cilium assembly"/>
    <property type="evidence" value="ECO:0000315"/>
    <property type="project" value="RGD"/>
</dbReference>
<dbReference type="GO" id="GO:0050965">
    <property type="term" value="P:detection of temperature stimulus involved in sensory perception of pain"/>
    <property type="evidence" value="ECO:0000266"/>
    <property type="project" value="RGD"/>
</dbReference>
<dbReference type="GO" id="GO:0000226">
    <property type="term" value="P:microtubule cytoskeleton organization"/>
    <property type="evidence" value="ECO:0000266"/>
    <property type="project" value="RGD"/>
</dbReference>
<dbReference type="GO" id="GO:0051560">
    <property type="term" value="P:mitochondrial calcium ion homeostasis"/>
    <property type="evidence" value="ECO:0000266"/>
    <property type="project" value="RGD"/>
</dbReference>
<dbReference type="GO" id="GO:0007399">
    <property type="term" value="P:nervous system development"/>
    <property type="evidence" value="ECO:0000315"/>
    <property type="project" value="RGD"/>
</dbReference>
<dbReference type="GO" id="GO:0070050">
    <property type="term" value="P:neuron cellular homeostasis"/>
    <property type="evidence" value="ECO:0000266"/>
    <property type="project" value="RGD"/>
</dbReference>
<dbReference type="GO" id="GO:0001764">
    <property type="term" value="P:neuron migration"/>
    <property type="evidence" value="ECO:0000266"/>
    <property type="project" value="RGD"/>
</dbReference>
<dbReference type="GO" id="GO:1905515">
    <property type="term" value="P:non-motile cilium assembly"/>
    <property type="evidence" value="ECO:0000266"/>
    <property type="project" value="RGD"/>
</dbReference>
<dbReference type="GO" id="GO:0045773">
    <property type="term" value="P:positive regulation of axon extension"/>
    <property type="evidence" value="ECO:0000315"/>
    <property type="project" value="RGD"/>
</dbReference>
<dbReference type="GO" id="GO:0001954">
    <property type="term" value="P:positive regulation of cell-matrix adhesion"/>
    <property type="evidence" value="ECO:0000315"/>
    <property type="project" value="RGD"/>
</dbReference>
<dbReference type="GO" id="GO:0002052">
    <property type="term" value="P:positive regulation of neuroblast proliferation"/>
    <property type="evidence" value="ECO:0000266"/>
    <property type="project" value="RGD"/>
</dbReference>
<dbReference type="GO" id="GO:0010976">
    <property type="term" value="P:positive regulation of neuron projection development"/>
    <property type="evidence" value="ECO:0000315"/>
    <property type="project" value="RGD"/>
</dbReference>
<dbReference type="GO" id="GO:2000060">
    <property type="term" value="P:positive regulation of ubiquitin-dependent protein catabolic process"/>
    <property type="evidence" value="ECO:0000266"/>
    <property type="project" value="RGD"/>
</dbReference>
<dbReference type="GO" id="GO:0030177">
    <property type="term" value="P:positive regulation of Wnt signaling pathway"/>
    <property type="evidence" value="ECO:0000266"/>
    <property type="project" value="RGD"/>
</dbReference>
<dbReference type="GO" id="GO:0008104">
    <property type="term" value="P:protein localization"/>
    <property type="evidence" value="ECO:0000266"/>
    <property type="project" value="RGD"/>
</dbReference>
<dbReference type="GO" id="GO:0071539">
    <property type="term" value="P:protein localization to centrosome"/>
    <property type="evidence" value="ECO:0000315"/>
    <property type="project" value="GO_Central"/>
</dbReference>
<dbReference type="GO" id="GO:0021852">
    <property type="term" value="P:pyramidal neuron migration to cerebral cortex"/>
    <property type="evidence" value="ECO:0000315"/>
    <property type="project" value="RGD"/>
</dbReference>
<dbReference type="GO" id="GO:0060998">
    <property type="term" value="P:regulation of dendritic spine development"/>
    <property type="evidence" value="ECO:0000315"/>
    <property type="project" value="RGD"/>
</dbReference>
<dbReference type="GO" id="GO:0010975">
    <property type="term" value="P:regulation of neuron projection development"/>
    <property type="evidence" value="ECO:0000315"/>
    <property type="project" value="UniProtKB"/>
</dbReference>
<dbReference type="GO" id="GO:0099175">
    <property type="term" value="P:regulation of postsynapse organization"/>
    <property type="evidence" value="ECO:0000266"/>
    <property type="project" value="RGD"/>
</dbReference>
<dbReference type="GO" id="GO:0090128">
    <property type="term" value="P:regulation of synapse maturation"/>
    <property type="evidence" value="ECO:0000266"/>
    <property type="project" value="RGD"/>
</dbReference>
<dbReference type="GO" id="GO:0051966">
    <property type="term" value="P:regulation of synaptic transmission, glutamatergic"/>
    <property type="evidence" value="ECO:0000315"/>
    <property type="project" value="MGI"/>
</dbReference>
<dbReference type="GO" id="GO:0051602">
    <property type="term" value="P:response to electrical stimulus"/>
    <property type="evidence" value="ECO:0000270"/>
    <property type="project" value="RGD"/>
</dbReference>
<dbReference type="GO" id="GO:0031929">
    <property type="term" value="P:TOR signaling"/>
    <property type="evidence" value="ECO:0000266"/>
    <property type="project" value="RGD"/>
</dbReference>
<dbReference type="GO" id="GO:0006511">
    <property type="term" value="P:ubiquitin-dependent protein catabolic process"/>
    <property type="evidence" value="ECO:0000266"/>
    <property type="project" value="RGD"/>
</dbReference>
<dbReference type="InterPro" id="IPR026081">
    <property type="entry name" value="DISC1"/>
</dbReference>
<dbReference type="PANTHER" id="PTHR14332">
    <property type="entry name" value="DISRUPTED IN SCHIZOPHRENIA 1 PROTEIN"/>
    <property type="match status" value="1"/>
</dbReference>
<dbReference type="PANTHER" id="PTHR14332:SF3">
    <property type="entry name" value="DISRUPTED IN SCHIZOPHRENIA 1 PROTEIN"/>
    <property type="match status" value="1"/>
</dbReference>
<protein>
    <recommendedName>
        <fullName evidence="10">Disrupted in schizophrenia 1 homolog</fullName>
    </recommendedName>
</protein>
<accession>Q810H6</accession>
<reference key="1">
    <citation type="journal article" date="2003" name="Proc. Natl. Acad. Sci. U.S.A.">
        <title>Disrupted-in-Schizophrenia-1 (DISC-1): mutant truncation prevents binding to NudE-like (NUDEL) and inhibits neurite outgrowth.</title>
        <authorList>
            <person name="Ozeki Y."/>
            <person name="Tomoda T."/>
            <person name="Kleiderlein J."/>
            <person name="Kamiya A."/>
            <person name="Bord L."/>
            <person name="Fujii K."/>
            <person name="Okawa M."/>
            <person name="Yamada N."/>
            <person name="Hatten M.E."/>
            <person name="Snyder S.H."/>
            <person name="Ross C.A."/>
            <person name="Sawa A."/>
        </authorList>
    </citation>
    <scope>NUCLEOTIDE SEQUENCE [MRNA] (ISOFORM 2)</scope>
    <scope>SUBCELLULAR LOCATION</scope>
    <scope>TISSUE SPECIFICITY</scope>
    <scope>DEVELOPMENTAL STAGE</scope>
    <source>
        <strain>Sprague-Dawley</strain>
    </source>
</reference>
<reference key="2">
    <citation type="journal article" date="2004" name="Proc. Natl. Acad. Sci. U.S.A.">
        <authorList>
            <person name="Ozeki Y."/>
            <person name="Tomoda T."/>
            <person name="Kleiderlein J."/>
            <person name="Kamiya A."/>
            <person name="Bord L."/>
            <person name="Fujii K."/>
            <person name="Okawa M."/>
            <person name="Yamada N."/>
            <person name="Hatten M.E."/>
            <person name="Snyder S.H."/>
            <person name="Ross C.A."/>
            <person name="Sawa A."/>
        </authorList>
    </citation>
    <scope>ERRATUM OF PUBMED:12506198</scope>
</reference>
<reference key="3">
    <citation type="journal article" date="2004" name="Nature">
        <title>Genome sequence of the Brown Norway rat yields insights into mammalian evolution.</title>
        <authorList>
            <person name="Gibbs R.A."/>
            <person name="Weinstock G.M."/>
            <person name="Metzker M.L."/>
            <person name="Muzny D.M."/>
            <person name="Sodergren E.J."/>
            <person name="Scherer S."/>
            <person name="Scott G."/>
            <person name="Steffen D."/>
            <person name="Worley K.C."/>
            <person name="Burch P.E."/>
            <person name="Okwuonu G."/>
            <person name="Hines S."/>
            <person name="Lewis L."/>
            <person name="Deramo C."/>
            <person name="Delgado O."/>
            <person name="Dugan-Rocha S."/>
            <person name="Miner G."/>
            <person name="Morgan M."/>
            <person name="Hawes A."/>
            <person name="Gill R."/>
            <person name="Holt R.A."/>
            <person name="Adams M.D."/>
            <person name="Amanatides P.G."/>
            <person name="Baden-Tillson H."/>
            <person name="Barnstead M."/>
            <person name="Chin S."/>
            <person name="Evans C.A."/>
            <person name="Ferriera S."/>
            <person name="Fosler C."/>
            <person name="Glodek A."/>
            <person name="Gu Z."/>
            <person name="Jennings D."/>
            <person name="Kraft C.L."/>
            <person name="Nguyen T."/>
            <person name="Pfannkoch C.M."/>
            <person name="Sitter C."/>
            <person name="Sutton G.G."/>
            <person name="Venter J.C."/>
            <person name="Woodage T."/>
            <person name="Smith D."/>
            <person name="Lee H.-M."/>
            <person name="Gustafson E."/>
            <person name="Cahill P."/>
            <person name="Kana A."/>
            <person name="Doucette-Stamm L."/>
            <person name="Weinstock K."/>
            <person name="Fechtel K."/>
            <person name="Weiss R.B."/>
            <person name="Dunn D.M."/>
            <person name="Green E.D."/>
            <person name="Blakesley R.W."/>
            <person name="Bouffard G.G."/>
            <person name="De Jong P.J."/>
            <person name="Osoegawa K."/>
            <person name="Zhu B."/>
            <person name="Marra M."/>
            <person name="Schein J."/>
            <person name="Bosdet I."/>
            <person name="Fjell C."/>
            <person name="Jones S."/>
            <person name="Krzywinski M."/>
            <person name="Mathewson C."/>
            <person name="Siddiqui A."/>
            <person name="Wye N."/>
            <person name="McPherson J."/>
            <person name="Zhao S."/>
            <person name="Fraser C.M."/>
            <person name="Shetty J."/>
            <person name="Shatsman S."/>
            <person name="Geer K."/>
            <person name="Chen Y."/>
            <person name="Abramzon S."/>
            <person name="Nierman W.C."/>
            <person name="Havlak P.H."/>
            <person name="Chen R."/>
            <person name="Durbin K.J."/>
            <person name="Egan A."/>
            <person name="Ren Y."/>
            <person name="Song X.-Z."/>
            <person name="Li B."/>
            <person name="Liu Y."/>
            <person name="Qin X."/>
            <person name="Cawley S."/>
            <person name="Cooney A.J."/>
            <person name="D'Souza L.M."/>
            <person name="Martin K."/>
            <person name="Wu J.Q."/>
            <person name="Gonzalez-Garay M.L."/>
            <person name="Jackson A.R."/>
            <person name="Kalafus K.J."/>
            <person name="McLeod M.P."/>
            <person name="Milosavljevic A."/>
            <person name="Virk D."/>
            <person name="Volkov A."/>
            <person name="Wheeler D.A."/>
            <person name="Zhang Z."/>
            <person name="Bailey J.A."/>
            <person name="Eichler E.E."/>
            <person name="Tuzun E."/>
            <person name="Birney E."/>
            <person name="Mongin E."/>
            <person name="Ureta-Vidal A."/>
            <person name="Woodwark C."/>
            <person name="Zdobnov E."/>
            <person name="Bork P."/>
            <person name="Suyama M."/>
            <person name="Torrents D."/>
            <person name="Alexandersson M."/>
            <person name="Trask B.J."/>
            <person name="Young J.M."/>
            <person name="Huang H."/>
            <person name="Wang H."/>
            <person name="Xing H."/>
            <person name="Daniels S."/>
            <person name="Gietzen D."/>
            <person name="Schmidt J."/>
            <person name="Stevens K."/>
            <person name="Vitt U."/>
            <person name="Wingrove J."/>
            <person name="Camara F."/>
            <person name="Mar Alba M."/>
            <person name="Abril J.F."/>
            <person name="Guigo R."/>
            <person name="Smit A."/>
            <person name="Dubchak I."/>
            <person name="Rubin E.M."/>
            <person name="Couronne O."/>
            <person name="Poliakov A."/>
            <person name="Huebner N."/>
            <person name="Ganten D."/>
            <person name="Goesele C."/>
            <person name="Hummel O."/>
            <person name="Kreitler T."/>
            <person name="Lee Y.-A."/>
            <person name="Monti J."/>
            <person name="Schulz H."/>
            <person name="Zimdahl H."/>
            <person name="Himmelbauer H."/>
            <person name="Lehrach H."/>
            <person name="Jacob H.J."/>
            <person name="Bromberg S."/>
            <person name="Gullings-Handley J."/>
            <person name="Jensen-Seaman M.I."/>
            <person name="Kwitek A.E."/>
            <person name="Lazar J."/>
            <person name="Pasko D."/>
            <person name="Tonellato P.J."/>
            <person name="Twigger S."/>
            <person name="Ponting C.P."/>
            <person name="Duarte J.M."/>
            <person name="Rice S."/>
            <person name="Goodstadt L."/>
            <person name="Beatson S.A."/>
            <person name="Emes R.D."/>
            <person name="Winter E.E."/>
            <person name="Webber C."/>
            <person name="Brandt P."/>
            <person name="Nyakatura G."/>
            <person name="Adetobi M."/>
            <person name="Chiaromonte F."/>
            <person name="Elnitski L."/>
            <person name="Eswara P."/>
            <person name="Hardison R.C."/>
            <person name="Hou M."/>
            <person name="Kolbe D."/>
            <person name="Makova K."/>
            <person name="Miller W."/>
            <person name="Nekrutenko A."/>
            <person name="Riemer C."/>
            <person name="Schwartz S."/>
            <person name="Taylor J."/>
            <person name="Yang S."/>
            <person name="Zhang Y."/>
            <person name="Lindpaintner K."/>
            <person name="Andrews T.D."/>
            <person name="Caccamo M."/>
            <person name="Clamp M."/>
            <person name="Clarke L."/>
            <person name="Curwen V."/>
            <person name="Durbin R.M."/>
            <person name="Eyras E."/>
            <person name="Searle S.M."/>
            <person name="Cooper G.M."/>
            <person name="Batzoglou S."/>
            <person name="Brudno M."/>
            <person name="Sidow A."/>
            <person name="Stone E.A."/>
            <person name="Payseur B.A."/>
            <person name="Bourque G."/>
            <person name="Lopez-Otin C."/>
            <person name="Puente X.S."/>
            <person name="Chakrabarti K."/>
            <person name="Chatterji S."/>
            <person name="Dewey C."/>
            <person name="Pachter L."/>
            <person name="Bray N."/>
            <person name="Yap V.B."/>
            <person name="Caspi A."/>
            <person name="Tesler G."/>
            <person name="Pevzner P.A."/>
            <person name="Haussler D."/>
            <person name="Roskin K.M."/>
            <person name="Baertsch R."/>
            <person name="Clawson H."/>
            <person name="Furey T.S."/>
            <person name="Hinrichs A.S."/>
            <person name="Karolchik D."/>
            <person name="Kent W.J."/>
            <person name="Rosenbloom K.R."/>
            <person name="Trumbower H."/>
            <person name="Weirauch M."/>
            <person name="Cooper D.N."/>
            <person name="Stenson P.D."/>
            <person name="Ma B."/>
            <person name="Brent M."/>
            <person name="Arumugam M."/>
            <person name="Shteynberg D."/>
            <person name="Copley R.R."/>
            <person name="Taylor M.S."/>
            <person name="Riethman H."/>
            <person name="Mudunuri U."/>
            <person name="Peterson J."/>
            <person name="Guyer M."/>
            <person name="Felsenfeld A."/>
            <person name="Old S."/>
            <person name="Mockrin S."/>
            <person name="Collins F.S."/>
        </authorList>
    </citation>
    <scope>NUCLEOTIDE SEQUENCE [LARGE SCALE GENOMIC DNA]</scope>
    <source>
        <strain>Brown Norway</strain>
    </source>
</reference>
<reference key="4">
    <citation type="journal article" date="2006" name="Hum. Mol. Genet.">
        <title>DISC1-NDEL1/NUDEL protein interaction, an essential component for neurite outgrowth, is modulated by genetic variations of DISC1.</title>
        <authorList>
            <person name="Kamiya A."/>
            <person name="Tomoda T."/>
            <person name="Chang J."/>
            <person name="Takaki M."/>
            <person name="Zhan C."/>
            <person name="Morita M."/>
            <person name="Cascio M.B."/>
            <person name="Elashvili S."/>
            <person name="Koizumi H."/>
            <person name="Takanezawa Y."/>
            <person name="Dickerson F."/>
            <person name="Yolken R."/>
            <person name="Arai H."/>
            <person name="Sawa A."/>
        </authorList>
    </citation>
    <scope>FUNCTION</scope>
    <scope>INTERACTION WITH NDEL1</scope>
    <scope>INDUCTION</scope>
    <scope>SUBCELLULAR LOCATION</scope>
</reference>
<reference key="5">
    <citation type="journal article" date="2007" name="Mol. Psychiatry">
        <title>A novel DISC1-interacting partner DISC1-binding zinc-finger protein: implication in the modulation of DISC1-dependent neurite outgrowth.</title>
        <authorList>
            <person name="Hattori T."/>
            <person name="Baba K."/>
            <person name="Matsuzaki S."/>
            <person name="Honda A."/>
            <person name="Miyoshi K."/>
            <person name="Inoue K."/>
            <person name="Taniguchi M."/>
            <person name="Hashimoto H."/>
            <person name="Shintani N."/>
            <person name="Baba A."/>
            <person name="Shimizu S."/>
            <person name="Yukioka F."/>
            <person name="Kumamoto N."/>
            <person name="Yamaguchi A."/>
            <person name="Tohyama M."/>
            <person name="Katayama T."/>
        </authorList>
    </citation>
    <scope>INTERACTION WITH ZNF365</scope>
</reference>
<name>DISC1_RAT</name>
<proteinExistence type="evidence at protein level"/>
<keyword id="KW-0025">Alternative splicing</keyword>
<keyword id="KW-0175">Coiled coil</keyword>
<keyword id="KW-0963">Cytoplasm</keyword>
<keyword id="KW-0206">Cytoskeleton</keyword>
<keyword id="KW-0217">Developmental protein</keyword>
<keyword id="KW-0493">Microtubule</keyword>
<keyword id="KW-0496">Mitochondrion</keyword>
<keyword id="KW-0524">Neurogenesis</keyword>
<keyword id="KW-1185">Reference proteome</keyword>
<keyword id="KW-0770">Synapse</keyword>
<keyword id="KW-0832">Ubl conjugation</keyword>
<keyword id="KW-0879">Wnt signaling pathway</keyword>
<gene>
    <name evidence="11" type="primary">Disc1</name>
</gene>
<feature type="chain" id="PRO_0000240231" description="Disrupted in schizophrenia 1 homolog">
    <location>
        <begin position="1"/>
        <end position="846"/>
    </location>
</feature>
<feature type="region of interest" description="Interaction with MAP1A" evidence="1">
    <location>
        <begin position="1"/>
        <end position="288"/>
    </location>
</feature>
<feature type="region of interest" description="Disordered" evidence="5">
    <location>
        <begin position="1"/>
        <end position="53"/>
    </location>
</feature>
<feature type="region of interest" description="Disordered" evidence="5">
    <location>
        <begin position="127"/>
        <end position="147"/>
    </location>
</feature>
<feature type="region of interest" description="Disordered" evidence="5">
    <location>
        <begin position="231"/>
        <end position="257"/>
    </location>
</feature>
<feature type="region of interest" description="Disordered" evidence="5">
    <location>
        <begin position="277"/>
        <end position="312"/>
    </location>
</feature>
<feature type="region of interest" description="Interaction with TRAF3IP1" evidence="1">
    <location>
        <begin position="289"/>
        <end position="686"/>
    </location>
</feature>
<feature type="region of interest" description="Disordered" evidence="5">
    <location>
        <begin position="409"/>
        <end position="436"/>
    </location>
</feature>
<feature type="region of interest" description="Required for localization to punctate cytoplasmic foci" evidence="1">
    <location>
        <begin position="429"/>
        <end position="587"/>
    </location>
</feature>
<feature type="region of interest" description="Necessary and sufficient for interaction with PCNT and localization at the centrosome" evidence="1">
    <location>
        <begin position="435"/>
        <end position="846"/>
    </location>
</feature>
<feature type="region of interest" description="Interaction with ATF4 and ATF5" evidence="1">
    <location>
        <begin position="588"/>
        <end position="846"/>
    </location>
</feature>
<feature type="region of interest" description="Interaction with NDEL1 and PAFAH1B1" evidence="1">
    <location>
        <begin position="721"/>
        <end position="846"/>
    </location>
</feature>
<feature type="region of interest" description="Interaction with PAFAH1B1" evidence="1">
    <location>
        <begin position="721"/>
        <end position="846"/>
    </location>
</feature>
<feature type="region of interest" description="Interaction with NDEL1" evidence="1">
    <location>
        <begin position="795"/>
        <end position="828"/>
    </location>
</feature>
<feature type="coiled-coil region" evidence="4">
    <location>
        <begin position="440"/>
        <end position="489"/>
    </location>
</feature>
<feature type="compositionally biased region" description="Basic and acidic residues" evidence="5">
    <location>
        <begin position="133"/>
        <end position="143"/>
    </location>
</feature>
<feature type="compositionally biased region" description="Basic and acidic residues" evidence="5">
    <location>
        <begin position="248"/>
        <end position="257"/>
    </location>
</feature>
<feature type="compositionally biased region" description="Polar residues" evidence="5">
    <location>
        <begin position="277"/>
        <end position="300"/>
    </location>
</feature>
<feature type="splice variant" id="VSP_019322" description="In isoform 2." evidence="9">
    <location>
        <begin position="741"/>
        <end position="762"/>
    </location>
</feature>
<sequence length="846" mass="92563">MQGAGSRGAWIHSPSHCPGNGHGSPPAVAPQRRRLTRRPGYMRSTASPGIGFLSPAVGMPRPISAGLTGQEFYPSQSKARQCSLDLRSHCQDSLVGNPFLKGSLGPAVTSVGHLHPAQGSMRERMVHSGVHSGNDRRQSERLTGDSGCRQEFLSSDSSKSLASSLDVAWSKGSRGLKTVRPLVSPASNGPVDIPSLPGFQDTFTSNFSFIRLSLGAAGERGEAEGCLPSREAEPLHQSPQEMAAEGSGSDRPHGEPRHLWTFSLHAAPGLVDLAQGTRSNRQPECGMVSSSDAGFSSQDASPAGGRSDQDGGWADAHGWHALLREWEPMLQDYLLSNRRQLEVTSLILKLQKLQEKAVEDGDYDMAETLRQRLEDLEQEKGRLPWALPSQQPALRSFLGYLATQTHAALHGAPQRAGSDDPEAPLEGQRRTTAQDSLPGLAVTRRDWLMREKEQLQKEIEALRARVSVLEAKEQRLSQELEDQEMLLRWQGCDQMALVAQLSPGQLQEVSKALGETLTSARWAPFRVEPPETLRSLRERTKSLDLAVRELTEQVCSGEKLCSSLRKRLADLDTRLPALLEAKMLALSGSCFSTAKELAEEIWAVSSEREGLEMFLGRLLALSSRNTRRLGSVKEDYLRCRQDLALQEAAHKTRVKANTVKCTEVLEGQLSCCRCPLLERVWKADLEACQLLMQSLEIQEAGSSSHVEDEKQVHSTGEAAQTAALAVPRTPHPEEEKSPLQVLCEWNTYSASLPHCAAGLWKEESHVVFAEVGDKCEAIGMRLLHLEDQLLGAMHGHDEALFQSLQGELQMVKETLQTMFLQLQPAKEAGGEASASYSTAGAQEAED</sequence>